<comment type="function">
    <text evidence="1">Located at the top of the head of the 30S subunit, it contacts several helices of the 16S rRNA. In the 70S ribosome it contacts the 23S rRNA (bridge B1a) and protein L5 of the 50S subunit (bridge B1b), connecting the 2 subunits; these bridges are implicated in subunit movement. Contacts the tRNAs in the A and P-sites.</text>
</comment>
<comment type="subunit">
    <text evidence="1">Part of the 30S ribosomal subunit. Forms a loose heterodimer with protein S19. Forms two bridges to the 50S subunit in the 70S ribosome.</text>
</comment>
<comment type="similarity">
    <text evidence="1">Belongs to the universal ribosomal protein uS13 family.</text>
</comment>
<keyword id="KW-0687">Ribonucleoprotein</keyword>
<keyword id="KW-0689">Ribosomal protein</keyword>
<keyword id="KW-0694">RNA-binding</keyword>
<keyword id="KW-0699">rRNA-binding</keyword>
<keyword id="KW-0820">tRNA-binding</keyword>
<accession>Q9PE55</accession>
<dbReference type="EMBL" id="AE003849">
    <property type="protein sequence ID" value="AAF83983.1"/>
    <property type="molecule type" value="Genomic_DNA"/>
</dbReference>
<dbReference type="PIR" id="F82714">
    <property type="entry name" value="F82714"/>
</dbReference>
<dbReference type="RefSeq" id="WP_010893686.1">
    <property type="nucleotide sequence ID" value="NC_002488.3"/>
</dbReference>
<dbReference type="SMR" id="Q9PE55"/>
<dbReference type="STRING" id="160492.XF_1173"/>
<dbReference type="KEGG" id="xfa:XF_1173"/>
<dbReference type="eggNOG" id="COG0099">
    <property type="taxonomic scope" value="Bacteria"/>
</dbReference>
<dbReference type="HOGENOM" id="CLU_103849_1_2_6"/>
<dbReference type="Proteomes" id="UP000000812">
    <property type="component" value="Chromosome"/>
</dbReference>
<dbReference type="GO" id="GO:0005829">
    <property type="term" value="C:cytosol"/>
    <property type="evidence" value="ECO:0007669"/>
    <property type="project" value="TreeGrafter"/>
</dbReference>
<dbReference type="GO" id="GO:0015935">
    <property type="term" value="C:small ribosomal subunit"/>
    <property type="evidence" value="ECO:0007669"/>
    <property type="project" value="TreeGrafter"/>
</dbReference>
<dbReference type="GO" id="GO:0019843">
    <property type="term" value="F:rRNA binding"/>
    <property type="evidence" value="ECO:0007669"/>
    <property type="project" value="UniProtKB-UniRule"/>
</dbReference>
<dbReference type="GO" id="GO:0003735">
    <property type="term" value="F:structural constituent of ribosome"/>
    <property type="evidence" value="ECO:0007669"/>
    <property type="project" value="InterPro"/>
</dbReference>
<dbReference type="GO" id="GO:0000049">
    <property type="term" value="F:tRNA binding"/>
    <property type="evidence" value="ECO:0007669"/>
    <property type="project" value="UniProtKB-UniRule"/>
</dbReference>
<dbReference type="GO" id="GO:0006412">
    <property type="term" value="P:translation"/>
    <property type="evidence" value="ECO:0007669"/>
    <property type="project" value="UniProtKB-UniRule"/>
</dbReference>
<dbReference type="FunFam" id="1.10.8.50:FF:000001">
    <property type="entry name" value="30S ribosomal protein S13"/>
    <property type="match status" value="1"/>
</dbReference>
<dbReference type="FunFam" id="4.10.910.10:FF:000001">
    <property type="entry name" value="30S ribosomal protein S13"/>
    <property type="match status" value="1"/>
</dbReference>
<dbReference type="Gene3D" id="1.10.8.50">
    <property type="match status" value="1"/>
</dbReference>
<dbReference type="Gene3D" id="4.10.910.10">
    <property type="entry name" value="30s ribosomal protein s13, domain 2"/>
    <property type="match status" value="1"/>
</dbReference>
<dbReference type="HAMAP" id="MF_01315">
    <property type="entry name" value="Ribosomal_uS13"/>
    <property type="match status" value="1"/>
</dbReference>
<dbReference type="InterPro" id="IPR027437">
    <property type="entry name" value="Rbsml_uS13_C"/>
</dbReference>
<dbReference type="InterPro" id="IPR001892">
    <property type="entry name" value="Ribosomal_uS13"/>
</dbReference>
<dbReference type="InterPro" id="IPR010979">
    <property type="entry name" value="Ribosomal_uS13-like_H2TH"/>
</dbReference>
<dbReference type="InterPro" id="IPR019980">
    <property type="entry name" value="Ribosomal_uS13_bac-type"/>
</dbReference>
<dbReference type="InterPro" id="IPR018269">
    <property type="entry name" value="Ribosomal_uS13_CS"/>
</dbReference>
<dbReference type="NCBIfam" id="TIGR03631">
    <property type="entry name" value="uS13_bact"/>
    <property type="match status" value="1"/>
</dbReference>
<dbReference type="PANTHER" id="PTHR10871">
    <property type="entry name" value="30S RIBOSOMAL PROTEIN S13/40S RIBOSOMAL PROTEIN S18"/>
    <property type="match status" value="1"/>
</dbReference>
<dbReference type="PANTHER" id="PTHR10871:SF1">
    <property type="entry name" value="SMALL RIBOSOMAL SUBUNIT PROTEIN US13M"/>
    <property type="match status" value="1"/>
</dbReference>
<dbReference type="Pfam" id="PF00416">
    <property type="entry name" value="Ribosomal_S13"/>
    <property type="match status" value="1"/>
</dbReference>
<dbReference type="PIRSF" id="PIRSF002134">
    <property type="entry name" value="Ribosomal_S13"/>
    <property type="match status" value="1"/>
</dbReference>
<dbReference type="SUPFAM" id="SSF46946">
    <property type="entry name" value="S13-like H2TH domain"/>
    <property type="match status" value="1"/>
</dbReference>
<dbReference type="PROSITE" id="PS00646">
    <property type="entry name" value="RIBOSOMAL_S13_1"/>
    <property type="match status" value="1"/>
</dbReference>
<dbReference type="PROSITE" id="PS50159">
    <property type="entry name" value="RIBOSOMAL_S13_2"/>
    <property type="match status" value="1"/>
</dbReference>
<reference key="1">
    <citation type="journal article" date="2000" name="Nature">
        <title>The genome sequence of the plant pathogen Xylella fastidiosa.</title>
        <authorList>
            <person name="Simpson A.J.G."/>
            <person name="Reinach F.C."/>
            <person name="Arruda P."/>
            <person name="Abreu F.A."/>
            <person name="Acencio M."/>
            <person name="Alvarenga R."/>
            <person name="Alves L.M.C."/>
            <person name="Araya J.E."/>
            <person name="Baia G.S."/>
            <person name="Baptista C.S."/>
            <person name="Barros M.H."/>
            <person name="Bonaccorsi E.D."/>
            <person name="Bordin S."/>
            <person name="Bove J.M."/>
            <person name="Briones M.R.S."/>
            <person name="Bueno M.R.P."/>
            <person name="Camargo A.A."/>
            <person name="Camargo L.E.A."/>
            <person name="Carraro D.M."/>
            <person name="Carrer H."/>
            <person name="Colauto N.B."/>
            <person name="Colombo C."/>
            <person name="Costa F.F."/>
            <person name="Costa M.C.R."/>
            <person name="Costa-Neto C.M."/>
            <person name="Coutinho L.L."/>
            <person name="Cristofani M."/>
            <person name="Dias-Neto E."/>
            <person name="Docena C."/>
            <person name="El-Dorry H."/>
            <person name="Facincani A.P."/>
            <person name="Ferreira A.J.S."/>
            <person name="Ferreira V.C.A."/>
            <person name="Ferro J.A."/>
            <person name="Fraga J.S."/>
            <person name="Franca S.C."/>
            <person name="Franco M.C."/>
            <person name="Frohme M."/>
            <person name="Furlan L.R."/>
            <person name="Garnier M."/>
            <person name="Goldman G.H."/>
            <person name="Goldman M.H.S."/>
            <person name="Gomes S.L."/>
            <person name="Gruber A."/>
            <person name="Ho P.L."/>
            <person name="Hoheisel J.D."/>
            <person name="Junqueira M.L."/>
            <person name="Kemper E.L."/>
            <person name="Kitajima J.P."/>
            <person name="Krieger J.E."/>
            <person name="Kuramae E.E."/>
            <person name="Laigret F."/>
            <person name="Lambais M.R."/>
            <person name="Leite L.C.C."/>
            <person name="Lemos E.G.M."/>
            <person name="Lemos M.V.F."/>
            <person name="Lopes S.A."/>
            <person name="Lopes C.R."/>
            <person name="Machado J.A."/>
            <person name="Machado M.A."/>
            <person name="Madeira A.M.B.N."/>
            <person name="Madeira H.M.F."/>
            <person name="Marino C.L."/>
            <person name="Marques M.V."/>
            <person name="Martins E.A.L."/>
            <person name="Martins E.M.F."/>
            <person name="Matsukuma A.Y."/>
            <person name="Menck C.F.M."/>
            <person name="Miracca E.C."/>
            <person name="Miyaki C.Y."/>
            <person name="Monteiro-Vitorello C.B."/>
            <person name="Moon D.H."/>
            <person name="Nagai M.A."/>
            <person name="Nascimento A.L.T.O."/>
            <person name="Netto L.E.S."/>
            <person name="Nhani A. Jr."/>
            <person name="Nobrega F.G."/>
            <person name="Nunes L.R."/>
            <person name="Oliveira M.A."/>
            <person name="de Oliveira M.C."/>
            <person name="de Oliveira R.C."/>
            <person name="Palmieri D.A."/>
            <person name="Paris A."/>
            <person name="Peixoto B.R."/>
            <person name="Pereira G.A.G."/>
            <person name="Pereira H.A. Jr."/>
            <person name="Pesquero J.B."/>
            <person name="Quaggio R.B."/>
            <person name="Roberto P.G."/>
            <person name="Rodrigues V."/>
            <person name="de Rosa A.J.M."/>
            <person name="de Rosa V.E. Jr."/>
            <person name="de Sa R.G."/>
            <person name="Santelli R.V."/>
            <person name="Sawasaki H.E."/>
            <person name="da Silva A.C.R."/>
            <person name="da Silva A.M."/>
            <person name="da Silva F.R."/>
            <person name="Silva W.A. Jr."/>
            <person name="da Silveira J.F."/>
            <person name="Silvestri M.L.Z."/>
            <person name="Siqueira W.J."/>
            <person name="de Souza A.A."/>
            <person name="de Souza A.P."/>
            <person name="Terenzi M.F."/>
            <person name="Truffi D."/>
            <person name="Tsai S.M."/>
            <person name="Tsuhako M.H."/>
            <person name="Vallada H."/>
            <person name="Van Sluys M.A."/>
            <person name="Verjovski-Almeida S."/>
            <person name="Vettore A.L."/>
            <person name="Zago M.A."/>
            <person name="Zatz M."/>
            <person name="Meidanis J."/>
            <person name="Setubal J.C."/>
        </authorList>
    </citation>
    <scope>NUCLEOTIDE SEQUENCE [LARGE SCALE GENOMIC DNA]</scope>
    <source>
        <strain>9a5c</strain>
    </source>
</reference>
<name>RS13_XYLFA</name>
<gene>
    <name evidence="1" type="primary">rpsM</name>
    <name type="ordered locus">XF_1173</name>
</gene>
<proteinExistence type="inferred from homology"/>
<sequence length="118" mass="13579">MARIAGVNLAIQKHVWIGLQSIYGIGRTRSRKVCDAANVAIYTKIRDLSEPEIERLRVEVGKYVIEGDLRREVGMAIKRLMDLNCYRGLRHRRGLPLRGQRTRTNARTRKGPRKAIKK</sequence>
<protein>
    <recommendedName>
        <fullName evidence="1">Small ribosomal subunit protein uS13</fullName>
    </recommendedName>
    <alternativeName>
        <fullName evidence="3">30S ribosomal protein S13</fullName>
    </alternativeName>
</protein>
<feature type="chain" id="PRO_0000132173" description="Small ribosomal subunit protein uS13">
    <location>
        <begin position="1"/>
        <end position="118"/>
    </location>
</feature>
<feature type="region of interest" description="Disordered" evidence="2">
    <location>
        <begin position="95"/>
        <end position="118"/>
    </location>
</feature>
<organism>
    <name type="scientific">Xylella fastidiosa (strain 9a5c)</name>
    <dbReference type="NCBI Taxonomy" id="160492"/>
    <lineage>
        <taxon>Bacteria</taxon>
        <taxon>Pseudomonadati</taxon>
        <taxon>Pseudomonadota</taxon>
        <taxon>Gammaproteobacteria</taxon>
        <taxon>Lysobacterales</taxon>
        <taxon>Lysobacteraceae</taxon>
        <taxon>Xylella</taxon>
    </lineage>
</organism>
<evidence type="ECO:0000255" key="1">
    <source>
        <dbReference type="HAMAP-Rule" id="MF_01315"/>
    </source>
</evidence>
<evidence type="ECO:0000256" key="2">
    <source>
        <dbReference type="SAM" id="MobiDB-lite"/>
    </source>
</evidence>
<evidence type="ECO:0000305" key="3"/>